<dbReference type="EC" id="4.1.2.40"/>
<dbReference type="EMBL" id="AE009949">
    <property type="protein sequence ID" value="AAL98473.1"/>
    <property type="molecule type" value="Genomic_DNA"/>
</dbReference>
<dbReference type="SMR" id="P63706"/>
<dbReference type="KEGG" id="spm:spyM18_1987"/>
<dbReference type="HOGENOM" id="CLU_058971_0_1_9"/>
<dbReference type="UniPathway" id="UPA00704">
    <property type="reaction ID" value="UER00716"/>
</dbReference>
<dbReference type="GO" id="GO:0061595">
    <property type="term" value="F:6-deoxy-6-sulfofructose-1-phosphate aldolase activity"/>
    <property type="evidence" value="ECO:0007669"/>
    <property type="project" value="TreeGrafter"/>
</dbReference>
<dbReference type="GO" id="GO:0009024">
    <property type="term" value="F:tagatose-6-phosphate kinase activity"/>
    <property type="evidence" value="ECO:0007669"/>
    <property type="project" value="InterPro"/>
</dbReference>
<dbReference type="GO" id="GO:0009025">
    <property type="term" value="F:tagatose-bisphosphate aldolase activity"/>
    <property type="evidence" value="ECO:0007669"/>
    <property type="project" value="UniProtKB-UniRule"/>
</dbReference>
<dbReference type="GO" id="GO:1902777">
    <property type="term" value="P:6-sulfoquinovose(1-) catabolic process"/>
    <property type="evidence" value="ECO:0007669"/>
    <property type="project" value="TreeGrafter"/>
</dbReference>
<dbReference type="GO" id="GO:2001059">
    <property type="term" value="P:D-tagatose 6-phosphate catabolic process"/>
    <property type="evidence" value="ECO:0007669"/>
    <property type="project" value="UniProtKB-UniRule"/>
</dbReference>
<dbReference type="GO" id="GO:0019512">
    <property type="term" value="P:lactose catabolic process via tagatose-6-phosphate"/>
    <property type="evidence" value="ECO:0007669"/>
    <property type="project" value="InterPro"/>
</dbReference>
<dbReference type="FunFam" id="3.20.20.70:FF:000137">
    <property type="entry name" value="Tagatose 1,6-diphosphate aldolase 2"/>
    <property type="match status" value="1"/>
</dbReference>
<dbReference type="Gene3D" id="3.20.20.70">
    <property type="entry name" value="Aldolase class I"/>
    <property type="match status" value="1"/>
</dbReference>
<dbReference type="HAMAP" id="MF_00734">
    <property type="entry name" value="LacD"/>
    <property type="match status" value="1"/>
</dbReference>
<dbReference type="InterPro" id="IPR013785">
    <property type="entry name" value="Aldolase_TIM"/>
</dbReference>
<dbReference type="InterPro" id="IPR002915">
    <property type="entry name" value="DeoC/FbaB/LacD_aldolase"/>
</dbReference>
<dbReference type="InterPro" id="IPR050552">
    <property type="entry name" value="LacD_aldolase"/>
</dbReference>
<dbReference type="InterPro" id="IPR005927">
    <property type="entry name" value="Tag_1.6-dipho_adolase"/>
</dbReference>
<dbReference type="NCBIfam" id="TIGR01232">
    <property type="entry name" value="lacD"/>
    <property type="match status" value="1"/>
</dbReference>
<dbReference type="NCBIfam" id="NF003180">
    <property type="entry name" value="PRK04161.1"/>
    <property type="match status" value="1"/>
</dbReference>
<dbReference type="NCBIfam" id="NF009065">
    <property type="entry name" value="PRK12399.1"/>
    <property type="match status" value="1"/>
</dbReference>
<dbReference type="NCBIfam" id="NF009498">
    <property type="entry name" value="PRK12858.1"/>
    <property type="match status" value="1"/>
</dbReference>
<dbReference type="PANTHER" id="PTHR39340">
    <property type="entry name" value="SULFOFRUCTOSEPHOSPHATE ALDOLASE"/>
    <property type="match status" value="1"/>
</dbReference>
<dbReference type="PANTHER" id="PTHR39340:SF1">
    <property type="entry name" value="SULFOFRUCTOSEPHOSPHATE ALDOLASE"/>
    <property type="match status" value="1"/>
</dbReference>
<dbReference type="Pfam" id="PF01791">
    <property type="entry name" value="DeoC"/>
    <property type="match status" value="1"/>
</dbReference>
<dbReference type="SMART" id="SM01133">
    <property type="entry name" value="DeoC"/>
    <property type="match status" value="1"/>
</dbReference>
<dbReference type="SUPFAM" id="SSF51569">
    <property type="entry name" value="Aldolase"/>
    <property type="match status" value="1"/>
</dbReference>
<sequence length="327" mass="36577">MTITLTENKRKSMEKLSVDGVISALAFDQRGALKRMMAQHQTKEPTVEQIEELKSLVSEELTPFASSILLDPEYGLPASRVRSEEAGLLLAYEKTGYDATTTSRLPDCLDVWSAKRIKEAGAEAVKFLLYYDIDGDQDVNEQKKAYIERIGSECRAEDIPFYLEILTYDEKIADNASPEFAKVKAHKVNEAMKVFSKERFGVDVLKVEVPVNMKFVEGFADGEVLFTKEEAAQAFRDQEASTDLPYIYLSAGVSAKLFQDTLVFAAESGAKFNGVLCGRATWAGSVKVYIEEGPQAAREWLRTEGFKNIDELNKVLDKTASPWTEKM</sequence>
<proteinExistence type="inferred from homology"/>
<feature type="chain" id="PRO_0000203968" description="Tagatose 1,6-diphosphate aldolase 2">
    <location>
        <begin position="1"/>
        <end position="327"/>
    </location>
</feature>
<keyword id="KW-0423">Lactose metabolism</keyword>
<keyword id="KW-0456">Lyase</keyword>
<evidence type="ECO:0000305" key="1"/>
<comment type="catalytic activity">
    <reaction>
        <text>D-tagatofuranose 1,6-bisphosphate = D-glyceraldehyde 3-phosphate + dihydroxyacetone phosphate</text>
        <dbReference type="Rhea" id="RHEA:22948"/>
        <dbReference type="ChEBI" id="CHEBI:57642"/>
        <dbReference type="ChEBI" id="CHEBI:58694"/>
        <dbReference type="ChEBI" id="CHEBI:59776"/>
        <dbReference type="EC" id="4.1.2.40"/>
    </reaction>
</comment>
<comment type="pathway">
    <text>Carbohydrate metabolism; D-tagatose 6-phosphate degradation; D-glyceraldehyde 3-phosphate and glycerone phosphate from D-tagatose 6-phosphate: step 2/2.</text>
</comment>
<comment type="similarity">
    <text evidence="1">Belongs to the aldolase LacD family.</text>
</comment>
<gene>
    <name type="primary">lacD2</name>
    <name type="synonym">lacD.2</name>
    <name type="ordered locus">spyM18_1987</name>
</gene>
<name>LACD2_STRP8</name>
<reference key="1">
    <citation type="journal article" date="2002" name="Proc. Natl. Acad. Sci. U.S.A.">
        <title>Genome sequence and comparative microarray analysis of serotype M18 group A Streptococcus strains associated with acute rheumatic fever outbreaks.</title>
        <authorList>
            <person name="Smoot J.C."/>
            <person name="Barbian K.D."/>
            <person name="Van Gompel J.J."/>
            <person name="Smoot L.M."/>
            <person name="Chaussee M.S."/>
            <person name="Sylva G.L."/>
            <person name="Sturdevant D.E."/>
            <person name="Ricklefs S.M."/>
            <person name="Porcella S.F."/>
            <person name="Parkins L.D."/>
            <person name="Beres S.B."/>
            <person name="Campbell D.S."/>
            <person name="Smith T.M."/>
            <person name="Zhang Q."/>
            <person name="Kapur V."/>
            <person name="Daly J.A."/>
            <person name="Veasy L.G."/>
            <person name="Musser J.M."/>
        </authorList>
    </citation>
    <scope>NUCLEOTIDE SEQUENCE [LARGE SCALE GENOMIC DNA]</scope>
    <source>
        <strain>MGAS8232</strain>
    </source>
</reference>
<accession>P63706</accession>
<accession>Q99Y15</accession>
<protein>
    <recommendedName>
        <fullName>Tagatose 1,6-diphosphate aldolase 2</fullName>
        <ecNumber>4.1.2.40</ecNumber>
    </recommendedName>
    <alternativeName>
        <fullName>D-tagatose-1,6-bisphosphate aldolase 2</fullName>
    </alternativeName>
    <alternativeName>
        <fullName>Tagatose-bisphosphate aldolase 2</fullName>
    </alternativeName>
</protein>
<organism>
    <name type="scientific">Streptococcus pyogenes serotype M18 (strain MGAS8232)</name>
    <dbReference type="NCBI Taxonomy" id="186103"/>
    <lineage>
        <taxon>Bacteria</taxon>
        <taxon>Bacillati</taxon>
        <taxon>Bacillota</taxon>
        <taxon>Bacilli</taxon>
        <taxon>Lactobacillales</taxon>
        <taxon>Streptococcaceae</taxon>
        <taxon>Streptococcus</taxon>
    </lineage>
</organism>